<comment type="function">
    <text evidence="1">May be involved in the ribosome maturation process.</text>
</comment>
<comment type="subcellular location">
    <subcellularLocation>
        <location>Nucleus</location>
        <location>Nucleolus</location>
    </subcellularLocation>
    <text evidence="1">Found in the dense fibrillar compartment region of the nucleolus.</text>
</comment>
<comment type="similarity">
    <text evidence="2">Belongs to the TRAFAC class OBG-HflX-like GTPase superfamily. OBG GTPase family.</text>
</comment>
<keyword id="KW-0342">GTP-binding</keyword>
<keyword id="KW-0547">Nucleotide-binding</keyword>
<keyword id="KW-0539">Nucleus</keyword>
<keyword id="KW-1185">Reference proteome</keyword>
<keyword id="KW-0690">Ribosome biogenesis</keyword>
<reference key="1">
    <citation type="journal article" date="2005" name="Science">
        <title>The transcriptional landscape of the mammalian genome.</title>
        <authorList>
            <person name="Carninci P."/>
            <person name="Kasukawa T."/>
            <person name="Katayama S."/>
            <person name="Gough J."/>
            <person name="Frith M.C."/>
            <person name="Maeda N."/>
            <person name="Oyama R."/>
            <person name="Ravasi T."/>
            <person name="Lenhard B."/>
            <person name="Wells C."/>
            <person name="Kodzius R."/>
            <person name="Shimokawa K."/>
            <person name="Bajic V.B."/>
            <person name="Brenner S.E."/>
            <person name="Batalov S."/>
            <person name="Forrest A.R."/>
            <person name="Zavolan M."/>
            <person name="Davis M.J."/>
            <person name="Wilming L.G."/>
            <person name="Aidinis V."/>
            <person name="Allen J.E."/>
            <person name="Ambesi-Impiombato A."/>
            <person name="Apweiler R."/>
            <person name="Aturaliya R.N."/>
            <person name="Bailey T.L."/>
            <person name="Bansal M."/>
            <person name="Baxter L."/>
            <person name="Beisel K.W."/>
            <person name="Bersano T."/>
            <person name="Bono H."/>
            <person name="Chalk A.M."/>
            <person name="Chiu K.P."/>
            <person name="Choudhary V."/>
            <person name="Christoffels A."/>
            <person name="Clutterbuck D.R."/>
            <person name="Crowe M.L."/>
            <person name="Dalla E."/>
            <person name="Dalrymple B.P."/>
            <person name="de Bono B."/>
            <person name="Della Gatta G."/>
            <person name="di Bernardo D."/>
            <person name="Down T."/>
            <person name="Engstrom P."/>
            <person name="Fagiolini M."/>
            <person name="Faulkner G."/>
            <person name="Fletcher C.F."/>
            <person name="Fukushima T."/>
            <person name="Furuno M."/>
            <person name="Futaki S."/>
            <person name="Gariboldi M."/>
            <person name="Georgii-Hemming P."/>
            <person name="Gingeras T.R."/>
            <person name="Gojobori T."/>
            <person name="Green R.E."/>
            <person name="Gustincich S."/>
            <person name="Harbers M."/>
            <person name="Hayashi Y."/>
            <person name="Hensch T.K."/>
            <person name="Hirokawa N."/>
            <person name="Hill D."/>
            <person name="Huminiecki L."/>
            <person name="Iacono M."/>
            <person name="Ikeo K."/>
            <person name="Iwama A."/>
            <person name="Ishikawa T."/>
            <person name="Jakt M."/>
            <person name="Kanapin A."/>
            <person name="Katoh M."/>
            <person name="Kawasawa Y."/>
            <person name="Kelso J."/>
            <person name="Kitamura H."/>
            <person name="Kitano H."/>
            <person name="Kollias G."/>
            <person name="Krishnan S.P."/>
            <person name="Kruger A."/>
            <person name="Kummerfeld S.K."/>
            <person name="Kurochkin I.V."/>
            <person name="Lareau L.F."/>
            <person name="Lazarevic D."/>
            <person name="Lipovich L."/>
            <person name="Liu J."/>
            <person name="Liuni S."/>
            <person name="McWilliam S."/>
            <person name="Madan Babu M."/>
            <person name="Madera M."/>
            <person name="Marchionni L."/>
            <person name="Matsuda H."/>
            <person name="Matsuzawa S."/>
            <person name="Miki H."/>
            <person name="Mignone F."/>
            <person name="Miyake S."/>
            <person name="Morris K."/>
            <person name="Mottagui-Tabar S."/>
            <person name="Mulder N."/>
            <person name="Nakano N."/>
            <person name="Nakauchi H."/>
            <person name="Ng P."/>
            <person name="Nilsson R."/>
            <person name="Nishiguchi S."/>
            <person name="Nishikawa S."/>
            <person name="Nori F."/>
            <person name="Ohara O."/>
            <person name="Okazaki Y."/>
            <person name="Orlando V."/>
            <person name="Pang K.C."/>
            <person name="Pavan W.J."/>
            <person name="Pavesi G."/>
            <person name="Pesole G."/>
            <person name="Petrovsky N."/>
            <person name="Piazza S."/>
            <person name="Reed J."/>
            <person name="Reid J.F."/>
            <person name="Ring B.Z."/>
            <person name="Ringwald M."/>
            <person name="Rost B."/>
            <person name="Ruan Y."/>
            <person name="Salzberg S.L."/>
            <person name="Sandelin A."/>
            <person name="Schneider C."/>
            <person name="Schoenbach C."/>
            <person name="Sekiguchi K."/>
            <person name="Semple C.A."/>
            <person name="Seno S."/>
            <person name="Sessa L."/>
            <person name="Sheng Y."/>
            <person name="Shibata Y."/>
            <person name="Shimada H."/>
            <person name="Shimada K."/>
            <person name="Silva D."/>
            <person name="Sinclair B."/>
            <person name="Sperling S."/>
            <person name="Stupka E."/>
            <person name="Sugiura K."/>
            <person name="Sultana R."/>
            <person name="Takenaka Y."/>
            <person name="Taki K."/>
            <person name="Tammoja K."/>
            <person name="Tan S.L."/>
            <person name="Tang S."/>
            <person name="Taylor M.S."/>
            <person name="Tegner J."/>
            <person name="Teichmann S.A."/>
            <person name="Ueda H.R."/>
            <person name="van Nimwegen E."/>
            <person name="Verardo R."/>
            <person name="Wei C.L."/>
            <person name="Yagi K."/>
            <person name="Yamanishi H."/>
            <person name="Zabarovsky E."/>
            <person name="Zhu S."/>
            <person name="Zimmer A."/>
            <person name="Hide W."/>
            <person name="Bult C."/>
            <person name="Grimmond S.M."/>
            <person name="Teasdale R.D."/>
            <person name="Liu E.T."/>
            <person name="Brusic V."/>
            <person name="Quackenbush J."/>
            <person name="Wahlestedt C."/>
            <person name="Mattick J.S."/>
            <person name="Hume D.A."/>
            <person name="Kai C."/>
            <person name="Sasaki D."/>
            <person name="Tomaru Y."/>
            <person name="Fukuda S."/>
            <person name="Kanamori-Katayama M."/>
            <person name="Suzuki M."/>
            <person name="Aoki J."/>
            <person name="Arakawa T."/>
            <person name="Iida J."/>
            <person name="Imamura K."/>
            <person name="Itoh M."/>
            <person name="Kato T."/>
            <person name="Kawaji H."/>
            <person name="Kawagashira N."/>
            <person name="Kawashima T."/>
            <person name="Kojima M."/>
            <person name="Kondo S."/>
            <person name="Konno H."/>
            <person name="Nakano K."/>
            <person name="Ninomiya N."/>
            <person name="Nishio T."/>
            <person name="Okada M."/>
            <person name="Plessy C."/>
            <person name="Shibata K."/>
            <person name="Shiraki T."/>
            <person name="Suzuki S."/>
            <person name="Tagami M."/>
            <person name="Waki K."/>
            <person name="Watahiki A."/>
            <person name="Okamura-Oho Y."/>
            <person name="Suzuki H."/>
            <person name="Kawai J."/>
            <person name="Hayashizaki Y."/>
        </authorList>
    </citation>
    <scope>NUCLEOTIDE SEQUENCE [LARGE SCALE MRNA]</scope>
    <source>
        <strain>C57BL/6J</strain>
        <tissue>Egg</tissue>
    </source>
</reference>
<reference key="2">
    <citation type="journal article" date="2004" name="Genome Res.">
        <title>The status, quality, and expansion of the NIH full-length cDNA project: the Mammalian Gene Collection (MGC).</title>
        <authorList>
            <consortium name="The MGC Project Team"/>
        </authorList>
    </citation>
    <scope>NUCLEOTIDE SEQUENCE [LARGE SCALE MRNA]</scope>
    <source>
        <strain>FVB/N</strain>
        <tissue>Kidney</tissue>
    </source>
</reference>
<proteinExistence type="evidence at transcript level"/>
<gene>
    <name type="primary">Gtpbp10</name>
</gene>
<accession>Q8K013</accession>
<sequence length="366" mass="40142">MVRCGCALLRKYGNFIDNLRIFTKGGSGGMGYPRLGGEGGRGGDVWVVAHKNMTLKQLKNKYPQKRFVAGGGANSRVSALQGSKGKDCEVPAPVGISVTDENGQVLGELNKEEDRVLVAKGGLGGKLHTNFLPLKGQKRIVHLDLKVIADVGLVGFPNAGKSSLLSRVSHATPVIADYAFTTLRPELGKIMYNDFKQISVADLPGLIEGAHMNKGMGHKFLKHLERTRQLLFVVDISGFQLSSVTPYRTAFETIILLTKELELYKEELQTKPALLAINKMDLPDAQVKLQELMKQLLSPEDFLHLFETKMIPEKALEFQHIVPISTVTGEGIAELKSCIRKALDEQDGKESDAHRSKQLLNLQSSS</sequence>
<name>GTPBA_MOUSE</name>
<feature type="chain" id="PRO_0000312631" description="GTP-binding protein 10">
    <location>
        <begin position="1"/>
        <end position="366"/>
    </location>
</feature>
<feature type="domain" description="Obg" evidence="3">
    <location>
        <begin position="13"/>
        <end position="148"/>
    </location>
</feature>
<feature type="domain" description="OBG-type G" evidence="2">
    <location>
        <begin position="149"/>
        <end position="344"/>
    </location>
</feature>
<feature type="region of interest" description="Disordered" evidence="4">
    <location>
        <begin position="346"/>
        <end position="366"/>
    </location>
</feature>
<feature type="compositionally biased region" description="Basic and acidic residues" evidence="4">
    <location>
        <begin position="346"/>
        <end position="355"/>
    </location>
</feature>
<feature type="binding site" evidence="2">
    <location>
        <begin position="155"/>
        <end position="162"/>
    </location>
    <ligand>
        <name>GTP</name>
        <dbReference type="ChEBI" id="CHEBI:37565"/>
    </ligand>
</feature>
<feature type="binding site" evidence="2">
    <location>
        <begin position="202"/>
        <end position="206"/>
    </location>
    <ligand>
        <name>GTP</name>
        <dbReference type="ChEBI" id="CHEBI:37565"/>
    </ligand>
</feature>
<feature type="binding site" evidence="2">
    <location>
        <begin position="278"/>
        <end position="281"/>
    </location>
    <ligand>
        <name>GTP</name>
        <dbReference type="ChEBI" id="CHEBI:37565"/>
    </ligand>
</feature>
<protein>
    <recommendedName>
        <fullName>GTP-binding protein 10</fullName>
    </recommendedName>
</protein>
<organism>
    <name type="scientific">Mus musculus</name>
    <name type="common">Mouse</name>
    <dbReference type="NCBI Taxonomy" id="10090"/>
    <lineage>
        <taxon>Eukaryota</taxon>
        <taxon>Metazoa</taxon>
        <taxon>Chordata</taxon>
        <taxon>Craniata</taxon>
        <taxon>Vertebrata</taxon>
        <taxon>Euteleostomi</taxon>
        <taxon>Mammalia</taxon>
        <taxon>Eutheria</taxon>
        <taxon>Euarchontoglires</taxon>
        <taxon>Glires</taxon>
        <taxon>Rodentia</taxon>
        <taxon>Myomorpha</taxon>
        <taxon>Muroidea</taxon>
        <taxon>Muridae</taxon>
        <taxon>Murinae</taxon>
        <taxon>Mus</taxon>
        <taxon>Mus</taxon>
    </lineage>
</organism>
<dbReference type="EMBL" id="AK139595">
    <property type="protein sequence ID" value="BAE24078.1"/>
    <property type="molecule type" value="mRNA"/>
</dbReference>
<dbReference type="EMBL" id="BC034507">
    <property type="protein sequence ID" value="AAH34507.1"/>
    <property type="molecule type" value="mRNA"/>
</dbReference>
<dbReference type="CCDS" id="CCDS39006.1"/>
<dbReference type="RefSeq" id="NP_694756.1">
    <property type="nucleotide sequence ID" value="NM_153116.2"/>
</dbReference>
<dbReference type="SMR" id="Q8K013"/>
<dbReference type="BioGRID" id="228915">
    <property type="interactions" value="1"/>
</dbReference>
<dbReference type="FunCoup" id="Q8K013">
    <property type="interactions" value="2124"/>
</dbReference>
<dbReference type="STRING" id="10090.ENSMUSP00000111101"/>
<dbReference type="GlyGen" id="Q8K013">
    <property type="glycosylation" value="1 site, 1 O-linked glycan (1 site)"/>
</dbReference>
<dbReference type="iPTMnet" id="Q8K013"/>
<dbReference type="PhosphoSitePlus" id="Q8K013"/>
<dbReference type="PaxDb" id="10090-ENSMUSP00000111101"/>
<dbReference type="ProteomicsDB" id="270903"/>
<dbReference type="Pumba" id="Q8K013"/>
<dbReference type="Antibodypedia" id="15416">
    <property type="antibodies" value="151 antibodies from 22 providers"/>
</dbReference>
<dbReference type="Ensembl" id="ENSMUST00000115441.9">
    <property type="protein sequence ID" value="ENSMUSP00000111101.3"/>
    <property type="gene ID" value="ENSMUSG00000040464.16"/>
</dbReference>
<dbReference type="GeneID" id="207704"/>
<dbReference type="KEGG" id="mmu:207704"/>
<dbReference type="UCSC" id="uc008wis.1">
    <property type="organism name" value="mouse"/>
</dbReference>
<dbReference type="AGR" id="MGI:2385599"/>
<dbReference type="CTD" id="85865"/>
<dbReference type="MGI" id="MGI:2385599">
    <property type="gene designation" value="Gtpbp10"/>
</dbReference>
<dbReference type="VEuPathDB" id="HostDB:ENSMUSG00000040464"/>
<dbReference type="eggNOG" id="KOG1489">
    <property type="taxonomic scope" value="Eukaryota"/>
</dbReference>
<dbReference type="GeneTree" id="ENSGT00940000155589"/>
<dbReference type="InParanoid" id="Q8K013"/>
<dbReference type="OMA" id="VFMVDIF"/>
<dbReference type="OrthoDB" id="347018at2759"/>
<dbReference type="PhylomeDB" id="Q8K013"/>
<dbReference type="TreeFam" id="TF314774"/>
<dbReference type="BioGRID-ORCS" id="207704">
    <property type="hits" value="2 hits in 79 CRISPR screens"/>
</dbReference>
<dbReference type="ChiTaRS" id="Gtpbp10">
    <property type="organism name" value="mouse"/>
</dbReference>
<dbReference type="PRO" id="PR:Q8K013"/>
<dbReference type="Proteomes" id="UP000000589">
    <property type="component" value="Chromosome 5"/>
</dbReference>
<dbReference type="RNAct" id="Q8K013">
    <property type="molecule type" value="protein"/>
</dbReference>
<dbReference type="Bgee" id="ENSMUSG00000040464">
    <property type="expression patterns" value="Expressed in undifferentiated genital tubercle and 65 other cell types or tissues"/>
</dbReference>
<dbReference type="ExpressionAtlas" id="Q8K013">
    <property type="expression patterns" value="baseline and differential"/>
</dbReference>
<dbReference type="GO" id="GO:0005739">
    <property type="term" value="C:mitochondrion"/>
    <property type="evidence" value="ECO:0007005"/>
    <property type="project" value="MGI"/>
</dbReference>
<dbReference type="GO" id="GO:0005730">
    <property type="term" value="C:nucleolus"/>
    <property type="evidence" value="ECO:0007669"/>
    <property type="project" value="UniProtKB-SubCell"/>
</dbReference>
<dbReference type="GO" id="GO:0005525">
    <property type="term" value="F:GTP binding"/>
    <property type="evidence" value="ECO:0007669"/>
    <property type="project" value="UniProtKB-KW"/>
</dbReference>
<dbReference type="GO" id="GO:0003924">
    <property type="term" value="F:GTPase activity"/>
    <property type="evidence" value="ECO:0007669"/>
    <property type="project" value="InterPro"/>
</dbReference>
<dbReference type="GO" id="GO:0000287">
    <property type="term" value="F:magnesium ion binding"/>
    <property type="evidence" value="ECO:0007669"/>
    <property type="project" value="InterPro"/>
</dbReference>
<dbReference type="GO" id="GO:0042254">
    <property type="term" value="P:ribosome biogenesis"/>
    <property type="evidence" value="ECO:0007669"/>
    <property type="project" value="UniProtKB-KW"/>
</dbReference>
<dbReference type="CDD" id="cd01898">
    <property type="entry name" value="Obg"/>
    <property type="match status" value="1"/>
</dbReference>
<dbReference type="FunFam" id="3.40.50.300:FF:001339">
    <property type="entry name" value="Mitochondrial ribosome-associated GTPase 2"/>
    <property type="match status" value="1"/>
</dbReference>
<dbReference type="Gene3D" id="2.70.210.12">
    <property type="entry name" value="GTP1/OBG domain"/>
    <property type="match status" value="1"/>
</dbReference>
<dbReference type="Gene3D" id="3.40.50.300">
    <property type="entry name" value="P-loop containing nucleotide triphosphate hydrolases"/>
    <property type="match status" value="1"/>
</dbReference>
<dbReference type="InterPro" id="IPR031167">
    <property type="entry name" value="G_OBG"/>
</dbReference>
<dbReference type="InterPro" id="IPR006073">
    <property type="entry name" value="GTP-bd"/>
</dbReference>
<dbReference type="InterPro" id="IPR014100">
    <property type="entry name" value="GTP-bd_Obg/CgtA"/>
</dbReference>
<dbReference type="InterPro" id="IPR006169">
    <property type="entry name" value="GTP1_OBG_dom"/>
</dbReference>
<dbReference type="InterPro" id="IPR036726">
    <property type="entry name" value="GTP1_OBG_dom_sf"/>
</dbReference>
<dbReference type="InterPro" id="IPR045086">
    <property type="entry name" value="OBG_GTPase"/>
</dbReference>
<dbReference type="InterPro" id="IPR027417">
    <property type="entry name" value="P-loop_NTPase"/>
</dbReference>
<dbReference type="PANTHER" id="PTHR11702">
    <property type="entry name" value="DEVELOPMENTALLY REGULATED GTP-BINDING PROTEIN-RELATED"/>
    <property type="match status" value="1"/>
</dbReference>
<dbReference type="PANTHER" id="PTHR11702:SF43">
    <property type="entry name" value="GTP-BINDING PROTEIN 10"/>
    <property type="match status" value="1"/>
</dbReference>
<dbReference type="Pfam" id="PF01018">
    <property type="entry name" value="GTP1_OBG"/>
    <property type="match status" value="1"/>
</dbReference>
<dbReference type="Pfam" id="PF01926">
    <property type="entry name" value="MMR_HSR1"/>
    <property type="match status" value="1"/>
</dbReference>
<dbReference type="PIRSF" id="PIRSF002401">
    <property type="entry name" value="GTP_bd_Obg/CgtA"/>
    <property type="match status" value="1"/>
</dbReference>
<dbReference type="PRINTS" id="PR00326">
    <property type="entry name" value="GTP1OBG"/>
</dbReference>
<dbReference type="SUPFAM" id="SSF82051">
    <property type="entry name" value="Obg GTP-binding protein N-terminal domain"/>
    <property type="match status" value="1"/>
</dbReference>
<dbReference type="SUPFAM" id="SSF52540">
    <property type="entry name" value="P-loop containing nucleoside triphosphate hydrolases"/>
    <property type="match status" value="1"/>
</dbReference>
<dbReference type="PROSITE" id="PS51710">
    <property type="entry name" value="G_OBG"/>
    <property type="match status" value="1"/>
</dbReference>
<dbReference type="PROSITE" id="PS51883">
    <property type="entry name" value="OBG"/>
    <property type="match status" value="1"/>
</dbReference>
<evidence type="ECO:0000250" key="1"/>
<evidence type="ECO:0000255" key="2">
    <source>
        <dbReference type="PROSITE-ProRule" id="PRU01047"/>
    </source>
</evidence>
<evidence type="ECO:0000255" key="3">
    <source>
        <dbReference type="PROSITE-ProRule" id="PRU01231"/>
    </source>
</evidence>
<evidence type="ECO:0000256" key="4">
    <source>
        <dbReference type="SAM" id="MobiDB-lite"/>
    </source>
</evidence>